<keyword id="KW-0067">ATP-binding</keyword>
<keyword id="KW-0342">GTP-binding</keyword>
<keyword id="KW-0547">Nucleotide-binding</keyword>
<comment type="function">
    <text evidence="1">Displays ATPase and GTPase activities.</text>
</comment>
<comment type="similarity">
    <text evidence="1">Belongs to the RapZ-like family.</text>
</comment>
<reference key="1">
    <citation type="submission" date="2008-06" db="EMBL/GenBank/DDBJ databases">
        <title>Lactobacillus casei BL23 complete genome sequence.</title>
        <authorList>
            <person name="Maze A."/>
            <person name="Boel G."/>
            <person name="Bourand A."/>
            <person name="Loux V."/>
            <person name="Gibrat J.F."/>
            <person name="Zuniga M."/>
            <person name="Hartke A."/>
            <person name="Deutscher J."/>
        </authorList>
    </citation>
    <scope>NUCLEOTIDE SEQUENCE [LARGE SCALE GENOMIC DNA]</scope>
    <source>
        <strain>BL23</strain>
    </source>
</reference>
<accession>B3WCQ8</accession>
<proteinExistence type="inferred from homology"/>
<feature type="chain" id="PRO_1000130765" description="Nucleotide-binding protein LCABL_10730">
    <location>
        <begin position="1"/>
        <end position="295"/>
    </location>
</feature>
<feature type="binding site" evidence="1">
    <location>
        <begin position="12"/>
        <end position="19"/>
    </location>
    <ligand>
        <name>ATP</name>
        <dbReference type="ChEBI" id="CHEBI:30616"/>
    </ligand>
</feature>
<feature type="binding site" evidence="1">
    <location>
        <begin position="62"/>
        <end position="65"/>
    </location>
    <ligand>
        <name>GTP</name>
        <dbReference type="ChEBI" id="CHEBI:37565"/>
    </ligand>
</feature>
<dbReference type="EMBL" id="FM177140">
    <property type="protein sequence ID" value="CAQ66159.1"/>
    <property type="molecule type" value="Genomic_DNA"/>
</dbReference>
<dbReference type="SMR" id="B3WCQ8"/>
<dbReference type="KEGG" id="lcb:LCABL_10730"/>
<dbReference type="HOGENOM" id="CLU_059558_0_0_9"/>
<dbReference type="GO" id="GO:0005524">
    <property type="term" value="F:ATP binding"/>
    <property type="evidence" value="ECO:0007669"/>
    <property type="project" value="UniProtKB-UniRule"/>
</dbReference>
<dbReference type="GO" id="GO:0005525">
    <property type="term" value="F:GTP binding"/>
    <property type="evidence" value="ECO:0007669"/>
    <property type="project" value="UniProtKB-UniRule"/>
</dbReference>
<dbReference type="Gene3D" id="3.40.50.300">
    <property type="entry name" value="P-loop containing nucleotide triphosphate hydrolases"/>
    <property type="match status" value="1"/>
</dbReference>
<dbReference type="HAMAP" id="MF_00636">
    <property type="entry name" value="RapZ_like"/>
    <property type="match status" value="1"/>
</dbReference>
<dbReference type="InterPro" id="IPR027417">
    <property type="entry name" value="P-loop_NTPase"/>
</dbReference>
<dbReference type="InterPro" id="IPR005337">
    <property type="entry name" value="RapZ-like"/>
</dbReference>
<dbReference type="InterPro" id="IPR053930">
    <property type="entry name" value="RapZ-like_N"/>
</dbReference>
<dbReference type="InterPro" id="IPR053931">
    <property type="entry name" value="RapZ_C"/>
</dbReference>
<dbReference type="NCBIfam" id="NF003828">
    <property type="entry name" value="PRK05416.1"/>
    <property type="match status" value="1"/>
</dbReference>
<dbReference type="PANTHER" id="PTHR30448">
    <property type="entry name" value="RNASE ADAPTER PROTEIN RAPZ"/>
    <property type="match status" value="1"/>
</dbReference>
<dbReference type="PANTHER" id="PTHR30448:SF0">
    <property type="entry name" value="RNASE ADAPTER PROTEIN RAPZ"/>
    <property type="match status" value="1"/>
</dbReference>
<dbReference type="Pfam" id="PF22740">
    <property type="entry name" value="PapZ_C"/>
    <property type="match status" value="1"/>
</dbReference>
<dbReference type="Pfam" id="PF03668">
    <property type="entry name" value="RapZ-like_N"/>
    <property type="match status" value="1"/>
</dbReference>
<dbReference type="PIRSF" id="PIRSF005052">
    <property type="entry name" value="P-loopkin"/>
    <property type="match status" value="1"/>
</dbReference>
<dbReference type="SUPFAM" id="SSF52540">
    <property type="entry name" value="P-loop containing nucleoside triphosphate hydrolases"/>
    <property type="match status" value="1"/>
</dbReference>
<evidence type="ECO:0000255" key="1">
    <source>
        <dbReference type="HAMAP-Rule" id="MF_00636"/>
    </source>
</evidence>
<gene>
    <name type="ordered locus">LCABL_10730</name>
</gene>
<sequence length="295" mass="33609">MTESLDLVIITGMSGAGKTVAMQAFEDLGYFCVDNMPPALLPKFWELVKESGKITKVALVVDLRSRAFYDQIIDMLANLDNNAYVHSRILFLDATDEELVSRYKETRRSHPLAMEGRLMDGIKKERALLTELRNRAQVVIDTTTLSPRQLREKIFLNFKESGSQPAFHIEVMSFGFKYGLPIDADIVMDVRFLPNPFYIKDYRPKTGLDPEVYNYVMDNEDAESFYNKFYDLLSEIMPKYKAEGKTSVTIAIGCTGGQHRSVAFAERIGKAFSDAYAVDITHRDIKKHKETVNRS</sequence>
<name>Y1073_LACCB</name>
<protein>
    <recommendedName>
        <fullName evidence="1">Nucleotide-binding protein LCABL_10730</fullName>
    </recommendedName>
</protein>
<organism>
    <name type="scientific">Lacticaseibacillus casei (strain BL23)</name>
    <name type="common">Lactobacillus casei</name>
    <dbReference type="NCBI Taxonomy" id="543734"/>
    <lineage>
        <taxon>Bacteria</taxon>
        <taxon>Bacillati</taxon>
        <taxon>Bacillota</taxon>
        <taxon>Bacilli</taxon>
        <taxon>Lactobacillales</taxon>
        <taxon>Lactobacillaceae</taxon>
        <taxon>Lacticaseibacillus</taxon>
    </lineage>
</organism>